<organism>
    <name type="scientific">Maridesulfovibrio salexigens (strain ATCC 14822 / DSM 2638 / NCIMB 8403 / VKM B-1763)</name>
    <name type="common">Desulfovibrio salexigens</name>
    <dbReference type="NCBI Taxonomy" id="526222"/>
    <lineage>
        <taxon>Bacteria</taxon>
        <taxon>Pseudomonadati</taxon>
        <taxon>Thermodesulfobacteriota</taxon>
        <taxon>Desulfovibrionia</taxon>
        <taxon>Desulfovibrionales</taxon>
        <taxon>Desulfovibrionaceae</taxon>
        <taxon>Maridesulfovibrio</taxon>
    </lineage>
</organism>
<evidence type="ECO:0000255" key="1">
    <source>
        <dbReference type="HAMAP-Rule" id="MF_00171"/>
    </source>
</evidence>
<keyword id="KW-0413">Isomerase</keyword>
<keyword id="KW-1185">Reference proteome</keyword>
<keyword id="KW-0819">tRNA processing</keyword>
<proteinExistence type="inferred from homology"/>
<comment type="function">
    <text evidence="1">Formation of pseudouridine at positions 38, 39 and 40 in the anticodon stem and loop of transfer RNAs.</text>
</comment>
<comment type="catalytic activity">
    <reaction evidence="1">
        <text>uridine(38/39/40) in tRNA = pseudouridine(38/39/40) in tRNA</text>
        <dbReference type="Rhea" id="RHEA:22376"/>
        <dbReference type="Rhea" id="RHEA-COMP:10085"/>
        <dbReference type="Rhea" id="RHEA-COMP:10087"/>
        <dbReference type="ChEBI" id="CHEBI:65314"/>
        <dbReference type="ChEBI" id="CHEBI:65315"/>
        <dbReference type="EC" id="5.4.99.12"/>
    </reaction>
</comment>
<comment type="subunit">
    <text evidence="1">Homodimer.</text>
</comment>
<comment type="similarity">
    <text evidence="1">Belongs to the tRNA pseudouridine synthase TruA family.</text>
</comment>
<sequence length="271" mass="30362">MQRIKLIIAYDGTNFCGWQLQPKLRTVQGDLEKAITRITGTTVRVHGSGRTDSGVHALGQVAHFDVDSCFASVKWQRALNSLLPDDVTILDAQLVSPEFHSRYSAIRKTYTYTLWLENSFFLPWRRHYVWKCGPLDFCALDQGMQYFLGEHDFSSFQNTGTEIKSTVRTIHEFKRYPGQTEQEMILEVCGSGFLKQMVRNMVGCLVRIGRGKAEPETVRSLLQMKDRTAAPATAPAQGLCMAGVYYGETGCGGTADTGRNQAQNCGINRED</sequence>
<protein>
    <recommendedName>
        <fullName evidence="1">tRNA pseudouridine synthase A</fullName>
        <ecNumber evidence="1">5.4.99.12</ecNumber>
    </recommendedName>
    <alternativeName>
        <fullName evidence="1">tRNA pseudouridine(38-40) synthase</fullName>
    </alternativeName>
    <alternativeName>
        <fullName evidence="1">tRNA pseudouridylate synthase I</fullName>
    </alternativeName>
    <alternativeName>
        <fullName evidence="1">tRNA-uridine isomerase I</fullName>
    </alternativeName>
</protein>
<name>TRUA_MARSD</name>
<reference key="1">
    <citation type="submission" date="2009-06" db="EMBL/GenBank/DDBJ databases">
        <title>Complete sequence of Desulfovibrio salexigens DSM 2638.</title>
        <authorList>
            <consortium name="US DOE Joint Genome Institute"/>
            <person name="Lucas S."/>
            <person name="Copeland A."/>
            <person name="Lapidus A."/>
            <person name="Glavina del Rio T."/>
            <person name="Tice H."/>
            <person name="Bruce D."/>
            <person name="Goodwin L."/>
            <person name="Pitluck S."/>
            <person name="Munk A.C."/>
            <person name="Brettin T."/>
            <person name="Detter J.C."/>
            <person name="Han C."/>
            <person name="Tapia R."/>
            <person name="Larimer F."/>
            <person name="Land M."/>
            <person name="Hauser L."/>
            <person name="Kyrpides N."/>
            <person name="Anderson I."/>
            <person name="Wall J.D."/>
            <person name="Arkin A.P."/>
            <person name="Dehal P."/>
            <person name="Chivian D."/>
            <person name="Giles B."/>
            <person name="Hazen T.C."/>
        </authorList>
    </citation>
    <scope>NUCLEOTIDE SEQUENCE [LARGE SCALE GENOMIC DNA]</scope>
    <source>
        <strain>ATCC 14822 / DSM 2638 / NCIMB 8403 / VKM B-1763</strain>
    </source>
</reference>
<accession>C6BW69</accession>
<dbReference type="EC" id="5.4.99.12" evidence="1"/>
<dbReference type="EMBL" id="CP001649">
    <property type="protein sequence ID" value="ACS78313.1"/>
    <property type="molecule type" value="Genomic_DNA"/>
</dbReference>
<dbReference type="RefSeq" id="WP_012765839.1">
    <property type="nucleotide sequence ID" value="NC_012881.1"/>
</dbReference>
<dbReference type="SMR" id="C6BW69"/>
<dbReference type="STRING" id="526222.Desal_0246"/>
<dbReference type="KEGG" id="dsa:Desal_0246"/>
<dbReference type="eggNOG" id="COG0101">
    <property type="taxonomic scope" value="Bacteria"/>
</dbReference>
<dbReference type="HOGENOM" id="CLU_014673_0_1_7"/>
<dbReference type="OrthoDB" id="9811823at2"/>
<dbReference type="Proteomes" id="UP000002601">
    <property type="component" value="Chromosome"/>
</dbReference>
<dbReference type="GO" id="GO:0003723">
    <property type="term" value="F:RNA binding"/>
    <property type="evidence" value="ECO:0007669"/>
    <property type="project" value="InterPro"/>
</dbReference>
<dbReference type="GO" id="GO:0160147">
    <property type="term" value="F:tRNA pseudouridine(38-40) synthase activity"/>
    <property type="evidence" value="ECO:0007669"/>
    <property type="project" value="UniProtKB-EC"/>
</dbReference>
<dbReference type="GO" id="GO:0031119">
    <property type="term" value="P:tRNA pseudouridine synthesis"/>
    <property type="evidence" value="ECO:0007669"/>
    <property type="project" value="UniProtKB-UniRule"/>
</dbReference>
<dbReference type="CDD" id="cd02570">
    <property type="entry name" value="PseudoU_synth_EcTruA"/>
    <property type="match status" value="1"/>
</dbReference>
<dbReference type="FunFam" id="3.30.70.580:FF:000001">
    <property type="entry name" value="tRNA pseudouridine synthase A"/>
    <property type="match status" value="1"/>
</dbReference>
<dbReference type="Gene3D" id="3.30.70.660">
    <property type="entry name" value="Pseudouridine synthase I, catalytic domain, C-terminal subdomain"/>
    <property type="match status" value="1"/>
</dbReference>
<dbReference type="Gene3D" id="3.30.70.580">
    <property type="entry name" value="Pseudouridine synthase I, catalytic domain, N-terminal subdomain"/>
    <property type="match status" value="1"/>
</dbReference>
<dbReference type="HAMAP" id="MF_00171">
    <property type="entry name" value="TruA"/>
    <property type="match status" value="1"/>
</dbReference>
<dbReference type="InterPro" id="IPR020103">
    <property type="entry name" value="PsdUridine_synth_cat_dom_sf"/>
</dbReference>
<dbReference type="InterPro" id="IPR001406">
    <property type="entry name" value="PsdUridine_synth_TruA"/>
</dbReference>
<dbReference type="InterPro" id="IPR020097">
    <property type="entry name" value="PsdUridine_synth_TruA_a/b_dom"/>
</dbReference>
<dbReference type="InterPro" id="IPR020095">
    <property type="entry name" value="PsdUridine_synth_TruA_C"/>
</dbReference>
<dbReference type="InterPro" id="IPR020094">
    <property type="entry name" value="TruA/RsuA/RluB/E/F_N"/>
</dbReference>
<dbReference type="NCBIfam" id="TIGR00071">
    <property type="entry name" value="hisT_truA"/>
    <property type="match status" value="1"/>
</dbReference>
<dbReference type="PANTHER" id="PTHR11142">
    <property type="entry name" value="PSEUDOURIDYLATE SYNTHASE"/>
    <property type="match status" value="1"/>
</dbReference>
<dbReference type="PANTHER" id="PTHR11142:SF0">
    <property type="entry name" value="TRNA PSEUDOURIDINE SYNTHASE-LIKE 1"/>
    <property type="match status" value="1"/>
</dbReference>
<dbReference type="Pfam" id="PF01416">
    <property type="entry name" value="PseudoU_synth_1"/>
    <property type="match status" value="2"/>
</dbReference>
<dbReference type="PIRSF" id="PIRSF001430">
    <property type="entry name" value="tRNA_psdUrid_synth"/>
    <property type="match status" value="1"/>
</dbReference>
<dbReference type="SUPFAM" id="SSF55120">
    <property type="entry name" value="Pseudouridine synthase"/>
    <property type="match status" value="1"/>
</dbReference>
<gene>
    <name evidence="1" type="primary">truA</name>
    <name type="ordered locus">Desal_0246</name>
</gene>
<feature type="chain" id="PRO_1000203688" description="tRNA pseudouridine synthase A">
    <location>
        <begin position="1"/>
        <end position="271"/>
    </location>
</feature>
<feature type="active site" description="Nucleophile" evidence="1">
    <location>
        <position position="52"/>
    </location>
</feature>
<feature type="binding site" evidence="1">
    <location>
        <position position="110"/>
    </location>
    <ligand>
        <name>substrate</name>
    </ligand>
</feature>